<comment type="function">
    <text evidence="1">Catalyzes the initial step of the lipid cycle reactions in the biosynthesis of the cell wall peptidoglycan: transfers peptidoglycan precursor phospho-MurNAc-pentapeptide from UDP-MurNAc-pentapeptide onto the lipid carrier undecaprenyl phosphate, yielding undecaprenyl-pyrophosphoryl-MurNAc-pentapeptide, known as lipid I.</text>
</comment>
<comment type="catalytic activity">
    <reaction evidence="1">
        <text>UDP-N-acetyl-alpha-D-muramoyl-L-alanyl-gamma-D-glutamyl-meso-2,6-diaminopimeloyl-D-alanyl-D-alanine + di-trans,octa-cis-undecaprenyl phosphate = di-trans,octa-cis-undecaprenyl diphospho-N-acetyl-alpha-D-muramoyl-L-alanyl-D-glutamyl-meso-2,6-diaminopimeloyl-D-alanyl-D-alanine + UMP</text>
        <dbReference type="Rhea" id="RHEA:28386"/>
        <dbReference type="ChEBI" id="CHEBI:57865"/>
        <dbReference type="ChEBI" id="CHEBI:60392"/>
        <dbReference type="ChEBI" id="CHEBI:61386"/>
        <dbReference type="ChEBI" id="CHEBI:61387"/>
        <dbReference type="EC" id="2.7.8.13"/>
    </reaction>
</comment>
<comment type="cofactor">
    <cofactor evidence="1">
        <name>Mg(2+)</name>
        <dbReference type="ChEBI" id="CHEBI:18420"/>
    </cofactor>
</comment>
<comment type="pathway">
    <text evidence="1">Cell wall biogenesis; peptidoglycan biosynthesis.</text>
</comment>
<comment type="subcellular location">
    <subcellularLocation>
        <location evidence="1">Cell inner membrane</location>
        <topology evidence="1">Multi-pass membrane protein</topology>
    </subcellularLocation>
</comment>
<comment type="similarity">
    <text evidence="1">Belongs to the glycosyltransferase 4 family. MraY subfamily.</text>
</comment>
<accession>B1XNS2</accession>
<proteinExistence type="inferred from homology"/>
<reference key="1">
    <citation type="submission" date="2008-02" db="EMBL/GenBank/DDBJ databases">
        <title>Complete sequence of Synechococcus sp. PCC 7002.</title>
        <authorList>
            <person name="Li T."/>
            <person name="Zhao J."/>
            <person name="Zhao C."/>
            <person name="Liu Z."/>
            <person name="Zhao F."/>
            <person name="Marquardt J."/>
            <person name="Nomura C.T."/>
            <person name="Persson S."/>
            <person name="Detter J.C."/>
            <person name="Richardson P.M."/>
            <person name="Lanz C."/>
            <person name="Schuster S.C."/>
            <person name="Wang J."/>
            <person name="Li S."/>
            <person name="Huang X."/>
            <person name="Cai T."/>
            <person name="Yu Z."/>
            <person name="Luo J."/>
            <person name="Zhao J."/>
            <person name="Bryant D.A."/>
        </authorList>
    </citation>
    <scope>NUCLEOTIDE SEQUENCE [LARGE SCALE GENOMIC DNA]</scope>
    <source>
        <strain>ATCC 27264 / PCC 7002 / PR-6</strain>
    </source>
</reference>
<sequence length="365" mass="38311">MESKSSSLPLFFQKPSGTQLLGLLSVLLVGLAVLISHQPQLNPSNILPLWVPVLVSAIVAGIFGMWIVPLLRRLKTGQIIREEGPQAHLKKAGTPTMGGLIFLPVGLAAGVIFAGFDPEAIAVALVTLAYGVIGWVDDWQVLRLKSNKGISPRMKLILQIAIAVVFCIWLALTAPELTTITFFAGLSLPLGVFFWALAGFAMVAESNATNLTDGVDGLAGGTGAIAFLGVGALALPAHPGLSLLCACLSGACLGFIYHNRNPAKVFMGDTGSLALGGGLAAAGILSGNIWGLLIISGIFCIEAVSVIAQVTYYKATKDETGQGKRLLKMAPIHHHLELSGWPETQIVGAFYLINLGLVLLSFILT</sequence>
<feature type="chain" id="PRO_1000116522" description="Phospho-N-acetylmuramoyl-pentapeptide-transferase">
    <location>
        <begin position="1"/>
        <end position="365"/>
    </location>
</feature>
<feature type="transmembrane region" description="Helical" evidence="1">
    <location>
        <begin position="15"/>
        <end position="35"/>
    </location>
</feature>
<feature type="transmembrane region" description="Helical" evidence="1">
    <location>
        <begin position="51"/>
        <end position="71"/>
    </location>
</feature>
<feature type="transmembrane region" description="Helical" evidence="1">
    <location>
        <begin position="96"/>
        <end position="116"/>
    </location>
</feature>
<feature type="transmembrane region" description="Helical" evidence="1">
    <location>
        <begin position="121"/>
        <end position="141"/>
    </location>
</feature>
<feature type="transmembrane region" description="Helical" evidence="1">
    <location>
        <begin position="156"/>
        <end position="176"/>
    </location>
</feature>
<feature type="transmembrane region" description="Helical" evidence="1">
    <location>
        <begin position="180"/>
        <end position="200"/>
    </location>
</feature>
<feature type="transmembrane region" description="Helical" evidence="1">
    <location>
        <begin position="217"/>
        <end position="237"/>
    </location>
</feature>
<feature type="transmembrane region" description="Helical" evidence="1">
    <location>
        <begin position="238"/>
        <end position="258"/>
    </location>
</feature>
<feature type="transmembrane region" description="Helical" evidence="1">
    <location>
        <begin position="279"/>
        <end position="299"/>
    </location>
</feature>
<feature type="transmembrane region" description="Helical" evidence="1">
    <location>
        <begin position="344"/>
        <end position="364"/>
    </location>
</feature>
<keyword id="KW-0131">Cell cycle</keyword>
<keyword id="KW-0132">Cell division</keyword>
<keyword id="KW-0997">Cell inner membrane</keyword>
<keyword id="KW-1003">Cell membrane</keyword>
<keyword id="KW-0133">Cell shape</keyword>
<keyword id="KW-0961">Cell wall biogenesis/degradation</keyword>
<keyword id="KW-0460">Magnesium</keyword>
<keyword id="KW-0472">Membrane</keyword>
<keyword id="KW-0479">Metal-binding</keyword>
<keyword id="KW-0573">Peptidoglycan synthesis</keyword>
<keyword id="KW-1185">Reference proteome</keyword>
<keyword id="KW-0808">Transferase</keyword>
<keyword id="KW-0812">Transmembrane</keyword>
<keyword id="KW-1133">Transmembrane helix</keyword>
<organism>
    <name type="scientific">Picosynechococcus sp. (strain ATCC 27264 / PCC 7002 / PR-6)</name>
    <name type="common">Agmenellum quadruplicatum</name>
    <dbReference type="NCBI Taxonomy" id="32049"/>
    <lineage>
        <taxon>Bacteria</taxon>
        <taxon>Bacillati</taxon>
        <taxon>Cyanobacteriota</taxon>
        <taxon>Cyanophyceae</taxon>
        <taxon>Oscillatoriophycideae</taxon>
        <taxon>Chroococcales</taxon>
        <taxon>Geminocystaceae</taxon>
        <taxon>Picosynechococcus</taxon>
    </lineage>
</organism>
<gene>
    <name evidence="1" type="primary">mraY</name>
    <name type="ordered locus">SYNPCC7002_A1607</name>
</gene>
<name>MRAY_PICP2</name>
<evidence type="ECO:0000255" key="1">
    <source>
        <dbReference type="HAMAP-Rule" id="MF_00038"/>
    </source>
</evidence>
<protein>
    <recommendedName>
        <fullName evidence="1">Phospho-N-acetylmuramoyl-pentapeptide-transferase</fullName>
        <ecNumber evidence="1">2.7.8.13</ecNumber>
    </recommendedName>
    <alternativeName>
        <fullName evidence="1">UDP-MurNAc-pentapeptide phosphotransferase</fullName>
    </alternativeName>
</protein>
<dbReference type="EC" id="2.7.8.13" evidence="1"/>
<dbReference type="EMBL" id="CP000951">
    <property type="protein sequence ID" value="ACA99597.1"/>
    <property type="molecule type" value="Genomic_DNA"/>
</dbReference>
<dbReference type="RefSeq" id="WP_012307220.1">
    <property type="nucleotide sequence ID" value="NZ_JAHHPU010000002.1"/>
</dbReference>
<dbReference type="SMR" id="B1XNS2"/>
<dbReference type="STRING" id="32049.SYNPCC7002_A1607"/>
<dbReference type="KEGG" id="syp:SYNPCC7002_A1607"/>
<dbReference type="eggNOG" id="COG0472">
    <property type="taxonomic scope" value="Bacteria"/>
</dbReference>
<dbReference type="HOGENOM" id="CLU_023982_0_2_3"/>
<dbReference type="UniPathway" id="UPA00219"/>
<dbReference type="Proteomes" id="UP000001688">
    <property type="component" value="Chromosome"/>
</dbReference>
<dbReference type="GO" id="GO:0005886">
    <property type="term" value="C:plasma membrane"/>
    <property type="evidence" value="ECO:0007669"/>
    <property type="project" value="UniProtKB-SubCell"/>
</dbReference>
<dbReference type="GO" id="GO:0046872">
    <property type="term" value="F:metal ion binding"/>
    <property type="evidence" value="ECO:0007669"/>
    <property type="project" value="UniProtKB-KW"/>
</dbReference>
<dbReference type="GO" id="GO:0008963">
    <property type="term" value="F:phospho-N-acetylmuramoyl-pentapeptide-transferase activity"/>
    <property type="evidence" value="ECO:0007669"/>
    <property type="project" value="UniProtKB-UniRule"/>
</dbReference>
<dbReference type="GO" id="GO:0051992">
    <property type="term" value="F:UDP-N-acetylmuramoyl-L-alanyl-D-glutamyl-meso-2,6-diaminopimelyl-D-alanyl-D-alanine:undecaprenyl-phosphate transferase activity"/>
    <property type="evidence" value="ECO:0007669"/>
    <property type="project" value="RHEA"/>
</dbReference>
<dbReference type="GO" id="GO:0051301">
    <property type="term" value="P:cell division"/>
    <property type="evidence" value="ECO:0007669"/>
    <property type="project" value="UniProtKB-KW"/>
</dbReference>
<dbReference type="GO" id="GO:0071555">
    <property type="term" value="P:cell wall organization"/>
    <property type="evidence" value="ECO:0007669"/>
    <property type="project" value="UniProtKB-KW"/>
</dbReference>
<dbReference type="GO" id="GO:0009252">
    <property type="term" value="P:peptidoglycan biosynthetic process"/>
    <property type="evidence" value="ECO:0007669"/>
    <property type="project" value="UniProtKB-UniRule"/>
</dbReference>
<dbReference type="GO" id="GO:0008360">
    <property type="term" value="P:regulation of cell shape"/>
    <property type="evidence" value="ECO:0007669"/>
    <property type="project" value="UniProtKB-KW"/>
</dbReference>
<dbReference type="CDD" id="cd06852">
    <property type="entry name" value="GT_MraY"/>
    <property type="match status" value="1"/>
</dbReference>
<dbReference type="HAMAP" id="MF_00038">
    <property type="entry name" value="MraY"/>
    <property type="match status" value="1"/>
</dbReference>
<dbReference type="InterPro" id="IPR000715">
    <property type="entry name" value="Glycosyl_transferase_4"/>
</dbReference>
<dbReference type="InterPro" id="IPR003524">
    <property type="entry name" value="PNAcMuramoyl-5peptid_Trfase"/>
</dbReference>
<dbReference type="InterPro" id="IPR018480">
    <property type="entry name" value="PNAcMuramoyl-5peptid_Trfase_CS"/>
</dbReference>
<dbReference type="NCBIfam" id="TIGR00445">
    <property type="entry name" value="mraY"/>
    <property type="match status" value="1"/>
</dbReference>
<dbReference type="PANTHER" id="PTHR22926">
    <property type="entry name" value="PHOSPHO-N-ACETYLMURAMOYL-PENTAPEPTIDE-TRANSFERASE"/>
    <property type="match status" value="1"/>
</dbReference>
<dbReference type="PANTHER" id="PTHR22926:SF5">
    <property type="entry name" value="PHOSPHO-N-ACETYLMURAMOYL-PENTAPEPTIDE-TRANSFERASE HOMOLOG"/>
    <property type="match status" value="1"/>
</dbReference>
<dbReference type="Pfam" id="PF00953">
    <property type="entry name" value="Glycos_transf_4"/>
    <property type="match status" value="1"/>
</dbReference>
<dbReference type="Pfam" id="PF10555">
    <property type="entry name" value="MraY_sig1"/>
    <property type="match status" value="1"/>
</dbReference>
<dbReference type="PROSITE" id="PS01347">
    <property type="entry name" value="MRAY_1"/>
    <property type="match status" value="1"/>
</dbReference>
<dbReference type="PROSITE" id="PS01348">
    <property type="entry name" value="MRAY_2"/>
    <property type="match status" value="1"/>
</dbReference>